<name>COAD_STRPQ</name>
<keyword id="KW-0067">ATP-binding</keyword>
<keyword id="KW-0173">Coenzyme A biosynthesis</keyword>
<keyword id="KW-0963">Cytoplasm</keyword>
<keyword id="KW-0460">Magnesium</keyword>
<keyword id="KW-0547">Nucleotide-binding</keyword>
<keyword id="KW-0548">Nucleotidyltransferase</keyword>
<keyword id="KW-0808">Transferase</keyword>
<feature type="chain" id="PRO_0000411309" description="Phosphopantetheine adenylyltransferase">
    <location>
        <begin position="1"/>
        <end position="163"/>
    </location>
</feature>
<feature type="binding site" evidence="1">
    <location>
        <begin position="11"/>
        <end position="12"/>
    </location>
    <ligand>
        <name>ATP</name>
        <dbReference type="ChEBI" id="CHEBI:30616"/>
    </ligand>
</feature>
<feature type="binding site" evidence="1">
    <location>
        <position position="11"/>
    </location>
    <ligand>
        <name>substrate</name>
    </ligand>
</feature>
<feature type="binding site" evidence="1">
    <location>
        <position position="19"/>
    </location>
    <ligand>
        <name>ATP</name>
        <dbReference type="ChEBI" id="CHEBI:30616"/>
    </ligand>
</feature>
<feature type="binding site" evidence="1">
    <location>
        <position position="43"/>
    </location>
    <ligand>
        <name>substrate</name>
    </ligand>
</feature>
<feature type="binding site" evidence="1">
    <location>
        <position position="76"/>
    </location>
    <ligand>
        <name>substrate</name>
    </ligand>
</feature>
<feature type="binding site" evidence="1">
    <location>
        <position position="90"/>
    </location>
    <ligand>
        <name>substrate</name>
    </ligand>
</feature>
<feature type="binding site" evidence="1">
    <location>
        <begin position="91"/>
        <end position="93"/>
    </location>
    <ligand>
        <name>ATP</name>
        <dbReference type="ChEBI" id="CHEBI:30616"/>
    </ligand>
</feature>
<feature type="binding site" evidence="1">
    <location>
        <position position="101"/>
    </location>
    <ligand>
        <name>ATP</name>
        <dbReference type="ChEBI" id="CHEBI:30616"/>
    </ligand>
</feature>
<feature type="binding site" evidence="1">
    <location>
        <begin position="126"/>
        <end position="132"/>
    </location>
    <ligand>
        <name>ATP</name>
        <dbReference type="ChEBI" id="CHEBI:30616"/>
    </ligand>
</feature>
<feature type="site" description="Transition state stabilizer" evidence="1">
    <location>
        <position position="19"/>
    </location>
</feature>
<dbReference type="EC" id="2.7.7.3" evidence="1"/>
<dbReference type="EMBL" id="BA000034">
    <property type="protein sequence ID" value="BAC63769.1"/>
    <property type="molecule type" value="Genomic_DNA"/>
</dbReference>
<dbReference type="RefSeq" id="WP_002983821.1">
    <property type="nucleotide sequence ID" value="NC_004606.1"/>
</dbReference>
<dbReference type="SMR" id="P0DA43"/>
<dbReference type="GeneID" id="69900575"/>
<dbReference type="KEGG" id="sps:SPs0674"/>
<dbReference type="HOGENOM" id="CLU_100149_0_1_9"/>
<dbReference type="UniPathway" id="UPA00241">
    <property type="reaction ID" value="UER00355"/>
</dbReference>
<dbReference type="GO" id="GO:0005737">
    <property type="term" value="C:cytoplasm"/>
    <property type="evidence" value="ECO:0007669"/>
    <property type="project" value="UniProtKB-SubCell"/>
</dbReference>
<dbReference type="GO" id="GO:0005524">
    <property type="term" value="F:ATP binding"/>
    <property type="evidence" value="ECO:0007669"/>
    <property type="project" value="UniProtKB-KW"/>
</dbReference>
<dbReference type="GO" id="GO:0004595">
    <property type="term" value="F:pantetheine-phosphate adenylyltransferase activity"/>
    <property type="evidence" value="ECO:0007669"/>
    <property type="project" value="UniProtKB-UniRule"/>
</dbReference>
<dbReference type="GO" id="GO:0015937">
    <property type="term" value="P:coenzyme A biosynthetic process"/>
    <property type="evidence" value="ECO:0007669"/>
    <property type="project" value="UniProtKB-UniRule"/>
</dbReference>
<dbReference type="CDD" id="cd02163">
    <property type="entry name" value="PPAT"/>
    <property type="match status" value="1"/>
</dbReference>
<dbReference type="Gene3D" id="3.40.50.620">
    <property type="entry name" value="HUPs"/>
    <property type="match status" value="1"/>
</dbReference>
<dbReference type="HAMAP" id="MF_00151">
    <property type="entry name" value="PPAT_bact"/>
    <property type="match status" value="1"/>
</dbReference>
<dbReference type="InterPro" id="IPR004821">
    <property type="entry name" value="Cyt_trans-like"/>
</dbReference>
<dbReference type="InterPro" id="IPR001980">
    <property type="entry name" value="PPAT"/>
</dbReference>
<dbReference type="InterPro" id="IPR014729">
    <property type="entry name" value="Rossmann-like_a/b/a_fold"/>
</dbReference>
<dbReference type="NCBIfam" id="TIGR01510">
    <property type="entry name" value="coaD_prev_kdtB"/>
    <property type="match status" value="1"/>
</dbReference>
<dbReference type="NCBIfam" id="TIGR00125">
    <property type="entry name" value="cyt_tran_rel"/>
    <property type="match status" value="1"/>
</dbReference>
<dbReference type="PANTHER" id="PTHR21342">
    <property type="entry name" value="PHOSPHOPANTETHEINE ADENYLYLTRANSFERASE"/>
    <property type="match status" value="1"/>
</dbReference>
<dbReference type="PANTHER" id="PTHR21342:SF1">
    <property type="entry name" value="PHOSPHOPANTETHEINE ADENYLYLTRANSFERASE"/>
    <property type="match status" value="1"/>
</dbReference>
<dbReference type="Pfam" id="PF01467">
    <property type="entry name" value="CTP_transf_like"/>
    <property type="match status" value="1"/>
</dbReference>
<dbReference type="PRINTS" id="PR01020">
    <property type="entry name" value="LPSBIOSNTHSS"/>
</dbReference>
<dbReference type="SUPFAM" id="SSF52374">
    <property type="entry name" value="Nucleotidylyl transferase"/>
    <property type="match status" value="1"/>
</dbReference>
<sequence>MLTKIGLYTGSFDPVTNGHLDIVKRASGLFDQIYVGIFDNPTKKSYFKLEVRKAMLTQALADFTNVIVVTSHERLAIDVAKELRVTHLIRGLRNATDFEYEENLEYFNHLLAPNIETVYLISRNKWQALSSSRVRELIHFQSSLEGLVPQSVIAQVEKMNEKT</sequence>
<organism>
    <name type="scientific">Streptococcus pyogenes serotype M3 (strain SSI-1)</name>
    <dbReference type="NCBI Taxonomy" id="193567"/>
    <lineage>
        <taxon>Bacteria</taxon>
        <taxon>Bacillati</taxon>
        <taxon>Bacillota</taxon>
        <taxon>Bacilli</taxon>
        <taxon>Lactobacillales</taxon>
        <taxon>Streptococcaceae</taxon>
        <taxon>Streptococcus</taxon>
    </lineage>
</organism>
<gene>
    <name evidence="1" type="primary">coaD</name>
    <name type="synonym">kdtB</name>
    <name type="ordered locus">SPs0674</name>
</gene>
<reference key="1">
    <citation type="journal article" date="2003" name="Genome Res.">
        <title>Genome sequence of an M3 strain of Streptococcus pyogenes reveals a large-scale genomic rearrangement in invasive strains and new insights into phage evolution.</title>
        <authorList>
            <person name="Nakagawa I."/>
            <person name="Kurokawa K."/>
            <person name="Yamashita A."/>
            <person name="Nakata M."/>
            <person name="Tomiyasu Y."/>
            <person name="Okahashi N."/>
            <person name="Kawabata S."/>
            <person name="Yamazaki K."/>
            <person name="Shiba T."/>
            <person name="Yasunaga T."/>
            <person name="Hayashi H."/>
            <person name="Hattori M."/>
            <person name="Hamada S."/>
        </authorList>
    </citation>
    <scope>NUCLEOTIDE SEQUENCE [LARGE SCALE GENOMIC DNA]</scope>
    <source>
        <strain>SSI-1</strain>
    </source>
</reference>
<comment type="function">
    <text evidence="1">Reversibly transfers an adenylyl group from ATP to 4'-phosphopantetheine, yielding dephospho-CoA (dPCoA) and pyrophosphate.</text>
</comment>
<comment type="catalytic activity">
    <reaction evidence="1">
        <text>(R)-4'-phosphopantetheine + ATP + H(+) = 3'-dephospho-CoA + diphosphate</text>
        <dbReference type="Rhea" id="RHEA:19801"/>
        <dbReference type="ChEBI" id="CHEBI:15378"/>
        <dbReference type="ChEBI" id="CHEBI:30616"/>
        <dbReference type="ChEBI" id="CHEBI:33019"/>
        <dbReference type="ChEBI" id="CHEBI:57328"/>
        <dbReference type="ChEBI" id="CHEBI:61723"/>
        <dbReference type="EC" id="2.7.7.3"/>
    </reaction>
</comment>
<comment type="cofactor">
    <cofactor evidence="1">
        <name>Mg(2+)</name>
        <dbReference type="ChEBI" id="CHEBI:18420"/>
    </cofactor>
</comment>
<comment type="pathway">
    <text evidence="1">Cofactor biosynthesis; coenzyme A biosynthesis; CoA from (R)-pantothenate: step 4/5.</text>
</comment>
<comment type="subunit">
    <text evidence="1">Homohexamer.</text>
</comment>
<comment type="subcellular location">
    <subcellularLocation>
        <location evidence="1">Cytoplasm</location>
    </subcellularLocation>
</comment>
<comment type="similarity">
    <text evidence="1">Belongs to the bacterial CoaD family.</text>
</comment>
<proteinExistence type="inferred from homology"/>
<evidence type="ECO:0000255" key="1">
    <source>
        <dbReference type="HAMAP-Rule" id="MF_00151"/>
    </source>
</evidence>
<protein>
    <recommendedName>
        <fullName evidence="1">Phosphopantetheine adenylyltransferase</fullName>
        <ecNumber evidence="1">2.7.7.3</ecNumber>
    </recommendedName>
    <alternativeName>
        <fullName evidence="1">Dephospho-CoA pyrophosphorylase</fullName>
    </alternativeName>
    <alternativeName>
        <fullName evidence="1">Pantetheine-phosphate adenylyltransferase</fullName>
        <shortName evidence="1">PPAT</shortName>
    </alternativeName>
</protein>
<accession>P0DA43</accession>
<accession>P58104</accession>
<accession>P63822</accession>